<organism>
    <name type="scientific">Bacillus pumilus (strain SAFR-032)</name>
    <dbReference type="NCBI Taxonomy" id="315750"/>
    <lineage>
        <taxon>Bacteria</taxon>
        <taxon>Bacillati</taxon>
        <taxon>Bacillota</taxon>
        <taxon>Bacilli</taxon>
        <taxon>Bacillales</taxon>
        <taxon>Bacillaceae</taxon>
        <taxon>Bacillus</taxon>
    </lineage>
</organism>
<dbReference type="EMBL" id="CP000813">
    <property type="protein sequence ID" value="ABV61611.1"/>
    <property type="molecule type" value="Genomic_DNA"/>
</dbReference>
<dbReference type="RefSeq" id="WP_012009439.1">
    <property type="nucleotide sequence ID" value="NZ_VEIS01000007.1"/>
</dbReference>
<dbReference type="SMR" id="A8FBJ4"/>
<dbReference type="STRING" id="315750.BPUM_0927"/>
<dbReference type="GeneID" id="5620192"/>
<dbReference type="KEGG" id="bpu:BPUM_0927"/>
<dbReference type="eggNOG" id="COG4399">
    <property type="taxonomic scope" value="Bacteria"/>
</dbReference>
<dbReference type="HOGENOM" id="CLU_042384_0_0_9"/>
<dbReference type="OrthoDB" id="9787430at2"/>
<dbReference type="Proteomes" id="UP000001355">
    <property type="component" value="Chromosome"/>
</dbReference>
<dbReference type="GO" id="GO:0005886">
    <property type="term" value="C:plasma membrane"/>
    <property type="evidence" value="ECO:0007669"/>
    <property type="project" value="UniProtKB-SubCell"/>
</dbReference>
<dbReference type="InterPro" id="IPR007383">
    <property type="entry name" value="DUF445"/>
</dbReference>
<dbReference type="InterPro" id="IPR016991">
    <property type="entry name" value="UCP032178"/>
</dbReference>
<dbReference type="PANTHER" id="PTHR35791">
    <property type="entry name" value="UPF0754 MEMBRANE PROTEIN YHEB"/>
    <property type="match status" value="1"/>
</dbReference>
<dbReference type="PANTHER" id="PTHR35791:SF1">
    <property type="entry name" value="UPF0754 MEMBRANE PROTEIN YHEB"/>
    <property type="match status" value="1"/>
</dbReference>
<dbReference type="Pfam" id="PF04286">
    <property type="entry name" value="DUF445"/>
    <property type="match status" value="1"/>
</dbReference>
<dbReference type="PIRSF" id="PIRSF032178">
    <property type="entry name" value="UCP032178"/>
    <property type="match status" value="1"/>
</dbReference>
<gene>
    <name type="ordered locus">BPUM_0927</name>
</gene>
<sequence length="377" mass="42873">MNIFTTFLFMIVIGAVIGAATNHLAIKMLFRPYKPYYLFGKQLPFTPGLIPKRRDEVAKQVGVLVMEHLLTPEGIQKRFESSEAKQEILHTVHRLIDKGADMEITVLSLLERFGVSHADVKADEWLHHWSDRKLASLLKKYNEQTLSELLPLEVENKISSKIPDAADYILKRGIHYFESEEGKARLGNMIDDFLKERGMLGGMVQMFLGNSSLIDRVHPEIIKFLRNAETKKFLTDLLVQEWEKVKQFSLQELDDKWNVKELAYSVKKQLLSHFSTKVILDKPVGSYVSEVAVDLKIYLAPVLVDKGIKAASNALEGLLAKLKFEDIIREQIELFPLKKMEELVISISNNELKMITFLGGFLGGLIGAIQAIFVTLF</sequence>
<name>Y927_BACP2</name>
<keyword id="KW-1003">Cell membrane</keyword>
<keyword id="KW-0472">Membrane</keyword>
<keyword id="KW-0812">Transmembrane</keyword>
<keyword id="KW-1133">Transmembrane helix</keyword>
<accession>A8FBJ4</accession>
<evidence type="ECO:0000250" key="1"/>
<evidence type="ECO:0000255" key="2"/>
<evidence type="ECO:0000305" key="3"/>
<feature type="chain" id="PRO_0000388282" description="UPF0754 membrane protein BPUM_0927">
    <location>
        <begin position="1"/>
        <end position="377"/>
    </location>
</feature>
<feature type="transmembrane region" description="Helical" evidence="2">
    <location>
        <begin position="1"/>
        <end position="21"/>
    </location>
</feature>
<feature type="transmembrane region" description="Helical" evidence="2">
    <location>
        <begin position="357"/>
        <end position="377"/>
    </location>
</feature>
<protein>
    <recommendedName>
        <fullName>UPF0754 membrane protein BPUM_0927</fullName>
    </recommendedName>
</protein>
<comment type="subcellular location">
    <subcellularLocation>
        <location evidence="1">Cell membrane</location>
        <topology evidence="1">Multi-pass membrane protein</topology>
    </subcellularLocation>
</comment>
<comment type="similarity">
    <text evidence="3">Belongs to the UPF0754 family.</text>
</comment>
<proteinExistence type="inferred from homology"/>
<reference key="1">
    <citation type="journal article" date="2007" name="PLoS ONE">
        <title>Paradoxical DNA repair and peroxide resistance gene conservation in Bacillus pumilus SAFR-032.</title>
        <authorList>
            <person name="Gioia J."/>
            <person name="Yerrapragada S."/>
            <person name="Qin X."/>
            <person name="Jiang H."/>
            <person name="Igboeli O.C."/>
            <person name="Muzny D."/>
            <person name="Dugan-Rocha S."/>
            <person name="Ding Y."/>
            <person name="Hawes A."/>
            <person name="Liu W."/>
            <person name="Perez L."/>
            <person name="Kovar C."/>
            <person name="Dinh H."/>
            <person name="Lee S."/>
            <person name="Nazareth L."/>
            <person name="Blyth P."/>
            <person name="Holder M."/>
            <person name="Buhay C."/>
            <person name="Tirumalai M.R."/>
            <person name="Liu Y."/>
            <person name="Dasgupta I."/>
            <person name="Bokhetache L."/>
            <person name="Fujita M."/>
            <person name="Karouia F."/>
            <person name="Eswara Moorthy P."/>
            <person name="Siefert J."/>
            <person name="Uzman A."/>
            <person name="Buzumbo P."/>
            <person name="Verma A."/>
            <person name="Zwiya H."/>
            <person name="McWilliams B.D."/>
            <person name="Olowu A."/>
            <person name="Clinkenbeard K.D."/>
            <person name="Newcombe D."/>
            <person name="Golebiewski L."/>
            <person name="Petrosino J.F."/>
            <person name="Nicholson W.L."/>
            <person name="Fox G.E."/>
            <person name="Venkateswaran K."/>
            <person name="Highlander S.K."/>
            <person name="Weinstock G.M."/>
        </authorList>
    </citation>
    <scope>NUCLEOTIDE SEQUENCE [LARGE SCALE GENOMIC DNA]</scope>
    <source>
        <strain>SAFR-032</strain>
    </source>
</reference>